<proteinExistence type="evidence at transcript level"/>
<reference key="1">
    <citation type="journal article" date="1993" name="Plant Physiol.">
        <title>Isolation and characterization of a cDNA clone encoding a small wound-inducible protein from Phaseolus vulgaris.</title>
        <authorList>
            <person name="Sheng J."/>
            <person name="Mehdy M.C."/>
        </authorList>
    </citation>
    <scope>NUCLEOTIDE SEQUENCE [GENOMIC DNA / MRNA]</scope>
    <source>
        <strain>cv. Canadian Wonder</strain>
    </source>
</reference>
<accession>Q09020</accession>
<comment type="tissue specificity">
    <text>Abundant in radicals and epicotyls of seedlings and higher in the roots than in stems and leaves of mature plants.</text>
</comment>
<comment type="developmental stage">
    <text>Higher levels in seedlings than in mature plants.</text>
</comment>
<comment type="induction">
    <text>By wounding.</text>
</comment>
<protein>
    <recommendedName>
        <fullName>Wound-induced basic protein</fullName>
    </recommendedName>
</protein>
<dbReference type="EMBL" id="L00625">
    <property type="protein sequence ID" value="AAA33774.1"/>
    <property type="molecule type" value="Genomic_DNA"/>
</dbReference>
<dbReference type="EMBL" id="D12914">
    <property type="protein sequence ID" value="BAA02299.1"/>
    <property type="molecule type" value="mRNA"/>
</dbReference>
<dbReference type="PIR" id="JS0731">
    <property type="entry name" value="JS0731"/>
</dbReference>
<dbReference type="InterPro" id="IPR012643">
    <property type="entry name" value="Wound_ind"/>
</dbReference>
<dbReference type="PANTHER" id="PTHR36752">
    <property type="entry name" value="OS12G0405700 PROTEIN"/>
    <property type="match status" value="1"/>
</dbReference>
<dbReference type="PANTHER" id="PTHR36752:SF2">
    <property type="entry name" value="OS12G0405700 PROTEIN"/>
    <property type="match status" value="1"/>
</dbReference>
<dbReference type="Pfam" id="PF08186">
    <property type="entry name" value="Wound_ind"/>
    <property type="match status" value="1"/>
</dbReference>
<sequence>MIYDVNSPLFRSFLSQKGGSSDKRKTEEQKPKEHRPKASENKPIMTE</sequence>
<organism>
    <name type="scientific">Phaseolus vulgaris</name>
    <name type="common">Kidney bean</name>
    <name type="synonym">French bean</name>
    <dbReference type="NCBI Taxonomy" id="3885"/>
    <lineage>
        <taxon>Eukaryota</taxon>
        <taxon>Viridiplantae</taxon>
        <taxon>Streptophyta</taxon>
        <taxon>Embryophyta</taxon>
        <taxon>Tracheophyta</taxon>
        <taxon>Spermatophyta</taxon>
        <taxon>Magnoliopsida</taxon>
        <taxon>eudicotyledons</taxon>
        <taxon>Gunneridae</taxon>
        <taxon>Pentapetalae</taxon>
        <taxon>rosids</taxon>
        <taxon>fabids</taxon>
        <taxon>Fabales</taxon>
        <taxon>Fabaceae</taxon>
        <taxon>Papilionoideae</taxon>
        <taxon>50 kb inversion clade</taxon>
        <taxon>NPAAA clade</taxon>
        <taxon>indigoferoid/millettioid clade</taxon>
        <taxon>Phaseoleae</taxon>
        <taxon>Phaseolus</taxon>
    </lineage>
</organism>
<feature type="chain" id="PRO_0000058562" description="Wound-induced basic protein">
    <location>
        <begin position="1"/>
        <end position="47"/>
    </location>
</feature>
<feature type="region of interest" description="Disordered" evidence="1">
    <location>
        <begin position="1"/>
        <end position="47"/>
    </location>
</feature>
<feature type="compositionally biased region" description="Basic and acidic residues" evidence="1">
    <location>
        <begin position="20"/>
        <end position="40"/>
    </location>
</feature>
<gene>
    <name type="primary">PR4</name>
</gene>
<name>PR4_PHAVU</name>
<evidence type="ECO:0000256" key="1">
    <source>
        <dbReference type="SAM" id="MobiDB-lite"/>
    </source>
</evidence>